<gene>
    <name type="primary">rnhC</name>
    <name type="synonym">rnhB</name>
    <name type="ordered locus">SP_0403</name>
</gene>
<accession>O07874</accession>
<comment type="function">
    <text evidence="1">Endonuclease that specifically degrades the RNA of RNA-DNA hybrids.</text>
</comment>
<comment type="catalytic activity">
    <reaction>
        <text>Endonucleolytic cleavage to 5'-phosphomonoester.</text>
        <dbReference type="EC" id="3.1.26.4"/>
    </reaction>
</comment>
<comment type="cofactor">
    <cofactor evidence="1">
        <name>Mn(2+)</name>
        <dbReference type="ChEBI" id="CHEBI:29035"/>
    </cofactor>
    <cofactor evidence="1">
        <name>Mg(2+)</name>
        <dbReference type="ChEBI" id="CHEBI:18420"/>
    </cofactor>
    <text evidence="1">Manganese or magnesium. Binds 1 divalent metal ion per monomer in the absence of substrate. May bind a second metal ion after substrate binding.</text>
</comment>
<comment type="subcellular location">
    <subcellularLocation>
        <location evidence="4">Cytoplasm</location>
    </subcellularLocation>
</comment>
<comment type="similarity">
    <text evidence="4">Belongs to the RNase HII family. RnhC subfamily.</text>
</comment>
<comment type="caution">
    <text evidence="5">Was originally defined as a RNase HII; but belongs to the RNase HIII subfamily.</text>
</comment>
<keyword id="KW-0963">Cytoplasm</keyword>
<keyword id="KW-0903">Direct protein sequencing</keyword>
<keyword id="KW-0255">Endonuclease</keyword>
<keyword id="KW-0378">Hydrolase</keyword>
<keyword id="KW-0460">Magnesium</keyword>
<keyword id="KW-0479">Metal-binding</keyword>
<keyword id="KW-0540">Nuclease</keyword>
<keyword id="KW-1185">Reference proteome</keyword>
<name>RNH3_STRPN</name>
<evidence type="ECO:0000250" key="1"/>
<evidence type="ECO:0000255" key="2">
    <source>
        <dbReference type="PROSITE-ProRule" id="PRU01319"/>
    </source>
</evidence>
<evidence type="ECO:0000269" key="3">
    <source>
    </source>
</evidence>
<evidence type="ECO:0000305" key="4"/>
<evidence type="ECO:0000305" key="5">
    <source>
    </source>
</evidence>
<dbReference type="EC" id="3.1.26.4"/>
<dbReference type="EMBL" id="U93576">
    <property type="protein sequence ID" value="AAC45437.1"/>
    <property type="molecule type" value="Genomic_DNA"/>
</dbReference>
<dbReference type="EMBL" id="AE005672">
    <property type="protein sequence ID" value="AAK74566.1"/>
    <property type="molecule type" value="Genomic_DNA"/>
</dbReference>
<dbReference type="PIR" id="E95046">
    <property type="entry name" value="E95046"/>
</dbReference>
<dbReference type="PIR" id="E97917">
    <property type="entry name" value="E97917"/>
</dbReference>
<dbReference type="RefSeq" id="WP_000146867.1">
    <property type="nucleotide sequence ID" value="NZ_CP155539.1"/>
</dbReference>
<dbReference type="SMR" id="O07874"/>
<dbReference type="PaxDb" id="170187-SP_0403"/>
<dbReference type="EnsemblBacteria" id="AAK74566">
    <property type="protein sequence ID" value="AAK74566"/>
    <property type="gene ID" value="SP_0403"/>
</dbReference>
<dbReference type="KEGG" id="spn:SP_0403"/>
<dbReference type="eggNOG" id="COG1039">
    <property type="taxonomic scope" value="Bacteria"/>
</dbReference>
<dbReference type="BioCyc" id="SPNE170187:G1FZB-419-MONOMER"/>
<dbReference type="Proteomes" id="UP000000585">
    <property type="component" value="Chromosome"/>
</dbReference>
<dbReference type="GO" id="GO:0005737">
    <property type="term" value="C:cytoplasm"/>
    <property type="evidence" value="ECO:0007669"/>
    <property type="project" value="UniProtKB-SubCell"/>
</dbReference>
<dbReference type="GO" id="GO:0032299">
    <property type="term" value="C:ribonuclease H2 complex"/>
    <property type="evidence" value="ECO:0007669"/>
    <property type="project" value="TreeGrafter"/>
</dbReference>
<dbReference type="GO" id="GO:0000287">
    <property type="term" value="F:magnesium ion binding"/>
    <property type="evidence" value="ECO:0007669"/>
    <property type="project" value="UniProtKB-UniRule"/>
</dbReference>
<dbReference type="GO" id="GO:0003723">
    <property type="term" value="F:RNA binding"/>
    <property type="evidence" value="ECO:0007669"/>
    <property type="project" value="InterPro"/>
</dbReference>
<dbReference type="GO" id="GO:0004523">
    <property type="term" value="F:RNA-DNA hybrid ribonuclease activity"/>
    <property type="evidence" value="ECO:0007669"/>
    <property type="project" value="UniProtKB-UniRule"/>
</dbReference>
<dbReference type="GO" id="GO:0043137">
    <property type="term" value="P:DNA replication, removal of RNA primer"/>
    <property type="evidence" value="ECO:0007669"/>
    <property type="project" value="TreeGrafter"/>
</dbReference>
<dbReference type="GO" id="GO:0006298">
    <property type="term" value="P:mismatch repair"/>
    <property type="evidence" value="ECO:0007669"/>
    <property type="project" value="TreeGrafter"/>
</dbReference>
<dbReference type="CDD" id="cd06590">
    <property type="entry name" value="RNase_HII_bacteria_HIII_like"/>
    <property type="match status" value="1"/>
</dbReference>
<dbReference type="CDD" id="cd14796">
    <property type="entry name" value="RNAse_HIII_N"/>
    <property type="match status" value="1"/>
</dbReference>
<dbReference type="FunFam" id="3.30.420.10:FF:000047">
    <property type="entry name" value="Ribonuclease HIII"/>
    <property type="match status" value="1"/>
</dbReference>
<dbReference type="Gene3D" id="3.30.420.10">
    <property type="entry name" value="Ribonuclease H-like superfamily/Ribonuclease H"/>
    <property type="match status" value="1"/>
</dbReference>
<dbReference type="Gene3D" id="3.30.310.10">
    <property type="entry name" value="TATA-Binding Protein"/>
    <property type="match status" value="1"/>
</dbReference>
<dbReference type="HAMAP" id="MF_00053">
    <property type="entry name" value="RNase_HIII"/>
    <property type="match status" value="1"/>
</dbReference>
<dbReference type="InterPro" id="IPR001352">
    <property type="entry name" value="RNase_HII/HIII"/>
</dbReference>
<dbReference type="InterPro" id="IPR024567">
    <property type="entry name" value="RNase_HII/HIII_dom"/>
</dbReference>
<dbReference type="InterPro" id="IPR004641">
    <property type="entry name" value="RNase_HIII"/>
</dbReference>
<dbReference type="InterPro" id="IPR024568">
    <property type="entry name" value="RNase_HIII_N"/>
</dbReference>
<dbReference type="InterPro" id="IPR012337">
    <property type="entry name" value="RNaseH-like_sf"/>
</dbReference>
<dbReference type="InterPro" id="IPR036397">
    <property type="entry name" value="RNaseH_sf"/>
</dbReference>
<dbReference type="InterPro" id="IPR012295">
    <property type="entry name" value="TBP_dom_sf"/>
</dbReference>
<dbReference type="NCBIfam" id="TIGR00716">
    <property type="entry name" value="rnhC"/>
    <property type="match status" value="1"/>
</dbReference>
<dbReference type="PANTHER" id="PTHR10954:SF23">
    <property type="entry name" value="RIBONUCLEASE"/>
    <property type="match status" value="1"/>
</dbReference>
<dbReference type="PANTHER" id="PTHR10954">
    <property type="entry name" value="RIBONUCLEASE H2 SUBUNIT A"/>
    <property type="match status" value="1"/>
</dbReference>
<dbReference type="Pfam" id="PF11858">
    <property type="entry name" value="DUF3378"/>
    <property type="match status" value="1"/>
</dbReference>
<dbReference type="Pfam" id="PF01351">
    <property type="entry name" value="RNase_HII"/>
    <property type="match status" value="1"/>
</dbReference>
<dbReference type="PIRSF" id="PIRSF037748">
    <property type="entry name" value="RnhC"/>
    <property type="match status" value="1"/>
</dbReference>
<dbReference type="SUPFAM" id="SSF53098">
    <property type="entry name" value="Ribonuclease H-like"/>
    <property type="match status" value="1"/>
</dbReference>
<dbReference type="PROSITE" id="PS51975">
    <property type="entry name" value="RNASE_H_2"/>
    <property type="match status" value="1"/>
</dbReference>
<proteinExistence type="evidence at protein level"/>
<feature type="initiator methionine" description="Removed" evidence="3">
    <location>
        <position position="1"/>
    </location>
</feature>
<feature type="chain" id="PRO_0000111701" description="Ribonuclease HIII">
    <location>
        <begin position="2"/>
        <end position="293"/>
    </location>
</feature>
<feature type="domain" description="RNase H type-2" evidence="2">
    <location>
        <begin position="78"/>
        <end position="293"/>
    </location>
</feature>
<feature type="binding site" evidence="1">
    <location>
        <position position="84"/>
    </location>
    <ligand>
        <name>a divalent metal cation</name>
        <dbReference type="ChEBI" id="CHEBI:60240"/>
    </ligand>
</feature>
<feature type="binding site" evidence="1">
    <location>
        <position position="85"/>
    </location>
    <ligand>
        <name>a divalent metal cation</name>
        <dbReference type="ChEBI" id="CHEBI:60240"/>
    </ligand>
</feature>
<feature type="binding site" evidence="1">
    <location>
        <position position="187"/>
    </location>
    <ligand>
        <name>a divalent metal cation</name>
        <dbReference type="ChEBI" id="CHEBI:60240"/>
    </ligand>
</feature>
<feature type="sequence conflict" description="In Ref. 1; AAC45437." evidence="4" ref="1">
    <original>T</original>
    <variation>A</variation>
    <location>
        <position position="130"/>
    </location>
</feature>
<feature type="sequence conflict" description="In Ref. 1; AAC45437." evidence="4" ref="1">
    <original>A</original>
    <variation>T</variation>
    <location>
        <position position="203"/>
    </location>
</feature>
<feature type="sequence conflict" description="In Ref. 1; AAC45437." evidence="4" ref="1">
    <original>S</original>
    <variation>A</variation>
    <location>
        <position position="222"/>
    </location>
</feature>
<feature type="sequence conflict" description="In Ref. 1; AAC45437." evidence="4" ref="1">
    <original>S</original>
    <variation>N</variation>
    <location>
        <position position="274"/>
    </location>
</feature>
<feature type="sequence conflict" description="In Ref. 1; AAC45437." evidence="4" ref="1">
    <original>KRLER</original>
    <variation>NA</variation>
    <location>
        <begin position="289"/>
        <end position="293"/>
    </location>
</feature>
<protein>
    <recommendedName>
        <fullName>Ribonuclease HIII</fullName>
        <shortName>RNase HIII</shortName>
        <ecNumber>3.1.26.4</ecNumber>
    </recommendedName>
</protein>
<reference key="1">
    <citation type="journal article" date="1997" name="J. Bacteriol.">
        <title>The rnhB gene encoding RNase HII of Streptococcus pneumoniae and evidence of conserved motifs in eucaryotic genes.</title>
        <authorList>
            <person name="Zhang Y.B."/>
            <person name="Ayalew S."/>
            <person name="Lacks S.A."/>
        </authorList>
    </citation>
    <scope>NUCLEOTIDE SEQUENCE [GENOMIC DNA]</scope>
    <scope>PROTEIN SEQUENCE OF 2-17</scope>
    <source>
        <strain>533</strain>
    </source>
</reference>
<reference key="2">
    <citation type="journal article" date="2001" name="Science">
        <title>Complete genome sequence of a virulent isolate of Streptococcus pneumoniae.</title>
        <authorList>
            <person name="Tettelin H."/>
            <person name="Nelson K.E."/>
            <person name="Paulsen I.T."/>
            <person name="Eisen J.A."/>
            <person name="Read T.D."/>
            <person name="Peterson S.N."/>
            <person name="Heidelberg J.F."/>
            <person name="DeBoy R.T."/>
            <person name="Haft D.H."/>
            <person name="Dodson R.J."/>
            <person name="Durkin A.S."/>
            <person name="Gwinn M.L."/>
            <person name="Kolonay J.F."/>
            <person name="Nelson W.C."/>
            <person name="Peterson J.D."/>
            <person name="Umayam L.A."/>
            <person name="White O."/>
            <person name="Salzberg S.L."/>
            <person name="Lewis M.R."/>
            <person name="Radune D."/>
            <person name="Holtzapple E.K."/>
            <person name="Khouri H.M."/>
            <person name="Wolf A.M."/>
            <person name="Utterback T.R."/>
            <person name="Hansen C.L."/>
            <person name="McDonald L.A."/>
            <person name="Feldblyum T.V."/>
            <person name="Angiuoli S.V."/>
            <person name="Dickinson T."/>
            <person name="Hickey E.K."/>
            <person name="Holt I.E."/>
            <person name="Loftus B.J."/>
            <person name="Yang F."/>
            <person name="Smith H.O."/>
            <person name="Venter J.C."/>
            <person name="Dougherty B.A."/>
            <person name="Morrison D.A."/>
            <person name="Hollingshead S.K."/>
            <person name="Fraser C.M."/>
        </authorList>
    </citation>
    <scope>NUCLEOTIDE SEQUENCE [LARGE SCALE GENOMIC DNA]</scope>
    <source>
        <strain>ATCC BAA-334 / TIGR4</strain>
    </source>
</reference>
<sequence length="293" mass="32347">MASITLTPSEKDIQAFLEHYQTSLAPSKNPYIRYFLKLPQATVSIYTSGKILLQGEGAEKYASFFGYQAVEQTSGQNLPLIGTDEVGNGSYFGGLAVVAAFVTPDQHDFLRKLGVGDSKTLTDQKIRQITPILKEKIQHQALLLSPSKYNEVIGDRYNAVSVKVALHNQAIYLLLQKGVQPEKIVIDAFTSAKNYDKYLAQEANRFSNPISLEEKAEGKYLSVAVSSVIARDLFLENLENLGRELGYQLPSGAGTASDKVASQILQAYGMQGLSFCAKLHFKNTEKAKKRLER</sequence>
<organism>
    <name type="scientific">Streptococcus pneumoniae serotype 4 (strain ATCC BAA-334 / TIGR4)</name>
    <dbReference type="NCBI Taxonomy" id="170187"/>
    <lineage>
        <taxon>Bacteria</taxon>
        <taxon>Bacillati</taxon>
        <taxon>Bacillota</taxon>
        <taxon>Bacilli</taxon>
        <taxon>Lactobacillales</taxon>
        <taxon>Streptococcaceae</taxon>
        <taxon>Streptococcus</taxon>
    </lineage>
</organism>